<keyword id="KW-1185">Reference proteome</keyword>
<name>YG188_YEAST</name>
<reference key="1">
    <citation type="journal article" date="1997" name="Yeast">
        <title>Sequencing of a 40.5 kb fragment located on the left arm of chromosome VII from Saccharomyces cerevisiae.</title>
        <authorList>
            <person name="Coglievina M."/>
            <person name="Klima R."/>
            <person name="Bertani I."/>
            <person name="Delneri D."/>
            <person name="Zaccaria P."/>
            <person name="Bruschi C.V."/>
        </authorList>
    </citation>
    <scope>NUCLEOTIDE SEQUENCE [GENOMIC DNA]</scope>
    <source>
        <strain>ATCC 96604 / S288c / FY1679</strain>
    </source>
</reference>
<reference key="2">
    <citation type="journal article" date="1997" name="Nature">
        <title>The nucleotide sequence of Saccharomyces cerevisiae chromosome VII.</title>
        <authorList>
            <person name="Tettelin H."/>
            <person name="Agostoni-Carbone M.L."/>
            <person name="Albermann K."/>
            <person name="Albers M."/>
            <person name="Arroyo J."/>
            <person name="Backes U."/>
            <person name="Barreiros T."/>
            <person name="Bertani I."/>
            <person name="Bjourson A.J."/>
            <person name="Brueckner M."/>
            <person name="Bruschi C.V."/>
            <person name="Carignani G."/>
            <person name="Castagnoli L."/>
            <person name="Cerdan E."/>
            <person name="Clemente M.L."/>
            <person name="Coblenz A."/>
            <person name="Coglievina M."/>
            <person name="Coissac E."/>
            <person name="Defoor E."/>
            <person name="Del Bino S."/>
            <person name="Delius H."/>
            <person name="Delneri D."/>
            <person name="de Wergifosse P."/>
            <person name="Dujon B."/>
            <person name="Durand P."/>
            <person name="Entian K.-D."/>
            <person name="Eraso P."/>
            <person name="Escribano V."/>
            <person name="Fabiani L."/>
            <person name="Fartmann B."/>
            <person name="Feroli F."/>
            <person name="Feuermann M."/>
            <person name="Frontali L."/>
            <person name="Garcia-Gonzalez M."/>
            <person name="Garcia-Saez M.I."/>
            <person name="Goffeau A."/>
            <person name="Guerreiro P."/>
            <person name="Hani J."/>
            <person name="Hansen M."/>
            <person name="Hebling U."/>
            <person name="Hernandez K."/>
            <person name="Heumann K."/>
            <person name="Hilger F."/>
            <person name="Hofmann B."/>
            <person name="Indge K.J."/>
            <person name="James C.M."/>
            <person name="Klima R."/>
            <person name="Koetter P."/>
            <person name="Kramer B."/>
            <person name="Kramer W."/>
            <person name="Lauquin G."/>
            <person name="Leuther H."/>
            <person name="Louis E.J."/>
            <person name="Maillier E."/>
            <person name="Marconi A."/>
            <person name="Martegani E."/>
            <person name="Mazon M.J."/>
            <person name="Mazzoni C."/>
            <person name="McReynolds A.D.K."/>
            <person name="Melchioretto P."/>
            <person name="Mewes H.-W."/>
            <person name="Minenkova O."/>
            <person name="Mueller-Auer S."/>
            <person name="Nawrocki A."/>
            <person name="Netter P."/>
            <person name="Neu R."/>
            <person name="Nombela C."/>
            <person name="Oliver S.G."/>
            <person name="Panzeri L."/>
            <person name="Paoluzi S."/>
            <person name="Plevani P."/>
            <person name="Portetelle D."/>
            <person name="Portillo F."/>
            <person name="Potier S."/>
            <person name="Purnelle B."/>
            <person name="Rieger M."/>
            <person name="Riles L."/>
            <person name="Rinaldi T."/>
            <person name="Robben J."/>
            <person name="Rodrigues-Pousada C."/>
            <person name="Rodriguez-Belmonte E."/>
            <person name="Rodriguez-Torres A.M."/>
            <person name="Rose M."/>
            <person name="Ruzzi M."/>
            <person name="Saliola M."/>
            <person name="Sanchez-Perez M."/>
            <person name="Schaefer B."/>
            <person name="Schaefer M."/>
            <person name="Scharfe M."/>
            <person name="Schmidheini T."/>
            <person name="Schreer A."/>
            <person name="Skala J."/>
            <person name="Souciet J.-L."/>
            <person name="Steensma H.Y."/>
            <person name="Talla E."/>
            <person name="Thierry A."/>
            <person name="Vandenbol M."/>
            <person name="van der Aart Q.J.M."/>
            <person name="Van Dyck L."/>
            <person name="Vanoni M."/>
            <person name="Verhasselt P."/>
            <person name="Voet M."/>
            <person name="Volckaert G."/>
            <person name="Wambutt R."/>
            <person name="Watson M.D."/>
            <person name="Weber N."/>
            <person name="Wedler E."/>
            <person name="Wedler H."/>
            <person name="Wipfli P."/>
            <person name="Wolf K."/>
            <person name="Wright L.F."/>
            <person name="Zaccaria P."/>
            <person name="Zimmermann M."/>
            <person name="Zollner A."/>
            <person name="Kleine K."/>
        </authorList>
    </citation>
    <scope>NUCLEOTIDE SEQUENCE [LARGE SCALE GENOMIC DNA]</scope>
    <source>
        <strain>ATCC 204508 / S288c</strain>
    </source>
</reference>
<reference key="3">
    <citation type="journal article" date="2014" name="G3 (Bethesda)">
        <title>The reference genome sequence of Saccharomyces cerevisiae: Then and now.</title>
        <authorList>
            <person name="Engel S.R."/>
            <person name="Dietrich F.S."/>
            <person name="Fisk D.G."/>
            <person name="Binkley G."/>
            <person name="Balakrishnan R."/>
            <person name="Costanzo M.C."/>
            <person name="Dwight S.S."/>
            <person name="Hitz B.C."/>
            <person name="Karra K."/>
            <person name="Nash R.S."/>
            <person name="Weng S."/>
            <person name="Wong E.D."/>
            <person name="Lloyd P."/>
            <person name="Skrzypek M.S."/>
            <person name="Miyasato S.R."/>
            <person name="Simison M."/>
            <person name="Cherry J.M."/>
        </authorList>
    </citation>
    <scope>GENOME REANNOTATION</scope>
    <source>
        <strain>ATCC 204508 / S288c</strain>
    </source>
</reference>
<reference key="4">
    <citation type="journal article" date="2002" name="Nat. Biotechnol.">
        <title>An integrated approach for finding overlooked genes in yeast.</title>
        <authorList>
            <person name="Kumar A."/>
            <person name="Harrison P.M."/>
            <person name="Cheung K.-H."/>
            <person name="Lan N."/>
            <person name="Echols N."/>
            <person name="Bertone P."/>
            <person name="Miller P."/>
            <person name="Gerstein M.B."/>
            <person name="Snyder M."/>
        </authorList>
    </citation>
    <scope>NUCLEOTIDE SEQUENCE [GENOMIC DNA]</scope>
</reference>
<proteinExistence type="predicted"/>
<gene>
    <name type="ordered locus">YGL188C-A</name>
</gene>
<organism>
    <name type="scientific">Saccharomyces cerevisiae (strain ATCC 204508 / S288c)</name>
    <name type="common">Baker's yeast</name>
    <dbReference type="NCBI Taxonomy" id="559292"/>
    <lineage>
        <taxon>Eukaryota</taxon>
        <taxon>Fungi</taxon>
        <taxon>Dikarya</taxon>
        <taxon>Ascomycota</taxon>
        <taxon>Saccharomycotina</taxon>
        <taxon>Saccharomycetes</taxon>
        <taxon>Saccharomycetales</taxon>
        <taxon>Saccharomycetaceae</taxon>
        <taxon>Saccharomyces</taxon>
    </lineage>
</organism>
<accession>Q8TGU1</accession>
<accession>D6VTW6</accession>
<protein>
    <recommendedName>
        <fullName>Uncharacterized protein YGL188C-A</fullName>
    </recommendedName>
</protein>
<feature type="chain" id="PRO_0000245378" description="Uncharacterized protein YGL188C-A">
    <location>
        <begin position="1"/>
        <end position="46"/>
    </location>
</feature>
<dbReference type="EMBL" id="X91489">
    <property type="status" value="NOT_ANNOTATED_CDS"/>
    <property type="molecule type" value="Genomic_DNA"/>
</dbReference>
<dbReference type="EMBL" id="Z72710">
    <property type="status" value="NOT_ANNOTATED_CDS"/>
    <property type="molecule type" value="Genomic_DNA"/>
</dbReference>
<dbReference type="EMBL" id="Z72711">
    <property type="status" value="NOT_ANNOTATED_CDS"/>
    <property type="molecule type" value="Genomic_DNA"/>
</dbReference>
<dbReference type="EMBL" id="AF479894">
    <property type="protein sequence ID" value="AAL79207.1"/>
    <property type="molecule type" value="Genomic_DNA"/>
</dbReference>
<dbReference type="EMBL" id="BK006941">
    <property type="protein sequence ID" value="DAA07927.1"/>
    <property type="molecule type" value="Genomic_DNA"/>
</dbReference>
<dbReference type="RefSeq" id="NP_878073.3">
    <property type="nucleotide sequence ID" value="NM_001184593.3"/>
</dbReference>
<dbReference type="BioGRID" id="36995">
    <property type="interactions" value="82"/>
</dbReference>
<dbReference type="FunCoup" id="Q8TGU1">
    <property type="interactions" value="13"/>
</dbReference>
<dbReference type="STRING" id="4932.YGL188C-A"/>
<dbReference type="PaxDb" id="4932-YGL188C-A"/>
<dbReference type="EnsemblFungi" id="YGL188C-A_mRNA">
    <property type="protein sequence ID" value="YGL188C-A"/>
    <property type="gene ID" value="YGL188C-A"/>
</dbReference>
<dbReference type="GeneID" id="1466453"/>
<dbReference type="KEGG" id="sce:YGL188C-A"/>
<dbReference type="AGR" id="SGD:S000028635"/>
<dbReference type="SGD" id="S000028635">
    <property type="gene designation" value="YGL188C-A"/>
</dbReference>
<dbReference type="VEuPathDB" id="FungiDB:YGL188C-A"/>
<dbReference type="HOGENOM" id="CLU_3191652_0_0_1"/>
<dbReference type="InParanoid" id="Q8TGU1"/>
<dbReference type="BioCyc" id="YEAST:G3O-31014-MONOMER"/>
<dbReference type="PRO" id="PR:Q8TGU1"/>
<dbReference type="Proteomes" id="UP000002311">
    <property type="component" value="Chromosome VII"/>
</dbReference>
<sequence>MLTTQKCESREGKNDEIFELGESNSDKILLKHGKCNLFSERKPVNH</sequence>